<protein>
    <recommendedName>
        <fullName evidence="1">Large ribosomal subunit protein uL5</fullName>
    </recommendedName>
    <alternativeName>
        <fullName evidence="2">50S ribosomal protein L5</fullName>
    </alternativeName>
</protein>
<reference key="1">
    <citation type="journal article" date="2007" name="J. Bacteriol.">
        <title>The complete genome sequence of Roseobacter denitrificans reveals a mixotrophic rather than photosynthetic metabolism.</title>
        <authorList>
            <person name="Swingley W.D."/>
            <person name="Sadekar S."/>
            <person name="Mastrian S.D."/>
            <person name="Matthies H.J."/>
            <person name="Hao J."/>
            <person name="Ramos H."/>
            <person name="Acharya C.R."/>
            <person name="Conrad A.L."/>
            <person name="Taylor H.L."/>
            <person name="Dejesa L.C."/>
            <person name="Shah M.K."/>
            <person name="O'Huallachain M.E."/>
            <person name="Lince M.T."/>
            <person name="Blankenship R.E."/>
            <person name="Beatty J.T."/>
            <person name="Touchman J.W."/>
        </authorList>
    </citation>
    <scope>NUCLEOTIDE SEQUENCE [LARGE SCALE GENOMIC DNA]</scope>
    <source>
        <strain>ATCC 33942 / OCh 114</strain>
    </source>
</reference>
<evidence type="ECO:0000255" key="1">
    <source>
        <dbReference type="HAMAP-Rule" id="MF_01333"/>
    </source>
</evidence>
<evidence type="ECO:0000305" key="2"/>
<gene>
    <name evidence="1" type="primary">rplE</name>
    <name type="ordered locus">RD1_1422</name>
</gene>
<sequence>MLDSANYTPRLKAVYRDTIRAALKEEFGYKNDMQIPRLDKIVLNIGCGAEAVRDSKKAKSAQADLTLIAGQKAMTTTAKKSIAGFRVREEMPLGAKVTLRGDRMYEFLDRLITIAMPRIRDFRGISGKSFDGRGNYAMGLKEHLVFPEIDFDKIDENWGMDIVIATTAQTDAEAKSLLKAFNMPFNS</sequence>
<feature type="chain" id="PRO_1000052816" description="Large ribosomal subunit protein uL5">
    <location>
        <begin position="1"/>
        <end position="187"/>
    </location>
</feature>
<name>RL5_ROSDO</name>
<proteinExistence type="inferred from homology"/>
<organism>
    <name type="scientific">Roseobacter denitrificans (strain ATCC 33942 / OCh 114)</name>
    <name type="common">Erythrobacter sp. (strain OCh 114)</name>
    <name type="synonym">Roseobacter denitrificans</name>
    <dbReference type="NCBI Taxonomy" id="375451"/>
    <lineage>
        <taxon>Bacteria</taxon>
        <taxon>Pseudomonadati</taxon>
        <taxon>Pseudomonadota</taxon>
        <taxon>Alphaproteobacteria</taxon>
        <taxon>Rhodobacterales</taxon>
        <taxon>Roseobacteraceae</taxon>
        <taxon>Roseobacter</taxon>
    </lineage>
</organism>
<dbReference type="EMBL" id="CP000362">
    <property type="protein sequence ID" value="ABG31061.1"/>
    <property type="molecule type" value="Genomic_DNA"/>
</dbReference>
<dbReference type="RefSeq" id="WP_011567681.1">
    <property type="nucleotide sequence ID" value="NC_008209.1"/>
</dbReference>
<dbReference type="SMR" id="Q16AD2"/>
<dbReference type="STRING" id="375451.RD1_1422"/>
<dbReference type="KEGG" id="rde:RD1_1422"/>
<dbReference type="eggNOG" id="COG0094">
    <property type="taxonomic scope" value="Bacteria"/>
</dbReference>
<dbReference type="HOGENOM" id="CLU_061015_2_1_5"/>
<dbReference type="OrthoDB" id="9806626at2"/>
<dbReference type="Proteomes" id="UP000007029">
    <property type="component" value="Chromosome"/>
</dbReference>
<dbReference type="GO" id="GO:1990904">
    <property type="term" value="C:ribonucleoprotein complex"/>
    <property type="evidence" value="ECO:0007669"/>
    <property type="project" value="UniProtKB-KW"/>
</dbReference>
<dbReference type="GO" id="GO:0005840">
    <property type="term" value="C:ribosome"/>
    <property type="evidence" value="ECO:0007669"/>
    <property type="project" value="UniProtKB-KW"/>
</dbReference>
<dbReference type="GO" id="GO:0019843">
    <property type="term" value="F:rRNA binding"/>
    <property type="evidence" value="ECO:0007669"/>
    <property type="project" value="UniProtKB-UniRule"/>
</dbReference>
<dbReference type="GO" id="GO:0003735">
    <property type="term" value="F:structural constituent of ribosome"/>
    <property type="evidence" value="ECO:0007669"/>
    <property type="project" value="InterPro"/>
</dbReference>
<dbReference type="GO" id="GO:0000049">
    <property type="term" value="F:tRNA binding"/>
    <property type="evidence" value="ECO:0007669"/>
    <property type="project" value="UniProtKB-UniRule"/>
</dbReference>
<dbReference type="GO" id="GO:0006412">
    <property type="term" value="P:translation"/>
    <property type="evidence" value="ECO:0007669"/>
    <property type="project" value="UniProtKB-UniRule"/>
</dbReference>
<dbReference type="FunFam" id="3.30.1440.10:FF:000001">
    <property type="entry name" value="50S ribosomal protein L5"/>
    <property type="match status" value="1"/>
</dbReference>
<dbReference type="Gene3D" id="3.30.1440.10">
    <property type="match status" value="1"/>
</dbReference>
<dbReference type="HAMAP" id="MF_01333_B">
    <property type="entry name" value="Ribosomal_uL5_B"/>
    <property type="match status" value="1"/>
</dbReference>
<dbReference type="InterPro" id="IPR002132">
    <property type="entry name" value="Ribosomal_uL5"/>
</dbReference>
<dbReference type="InterPro" id="IPR020930">
    <property type="entry name" value="Ribosomal_uL5_bac-type"/>
</dbReference>
<dbReference type="InterPro" id="IPR031309">
    <property type="entry name" value="Ribosomal_uL5_C"/>
</dbReference>
<dbReference type="InterPro" id="IPR020929">
    <property type="entry name" value="Ribosomal_uL5_CS"/>
</dbReference>
<dbReference type="InterPro" id="IPR022803">
    <property type="entry name" value="Ribosomal_uL5_dom_sf"/>
</dbReference>
<dbReference type="InterPro" id="IPR031310">
    <property type="entry name" value="Ribosomal_uL5_N"/>
</dbReference>
<dbReference type="NCBIfam" id="NF000585">
    <property type="entry name" value="PRK00010.1"/>
    <property type="match status" value="1"/>
</dbReference>
<dbReference type="PANTHER" id="PTHR11994">
    <property type="entry name" value="60S RIBOSOMAL PROTEIN L11-RELATED"/>
    <property type="match status" value="1"/>
</dbReference>
<dbReference type="Pfam" id="PF00281">
    <property type="entry name" value="Ribosomal_L5"/>
    <property type="match status" value="1"/>
</dbReference>
<dbReference type="Pfam" id="PF00673">
    <property type="entry name" value="Ribosomal_L5_C"/>
    <property type="match status" value="1"/>
</dbReference>
<dbReference type="PIRSF" id="PIRSF002161">
    <property type="entry name" value="Ribosomal_L5"/>
    <property type="match status" value="1"/>
</dbReference>
<dbReference type="SUPFAM" id="SSF55282">
    <property type="entry name" value="RL5-like"/>
    <property type="match status" value="1"/>
</dbReference>
<dbReference type="PROSITE" id="PS00358">
    <property type="entry name" value="RIBOSOMAL_L5"/>
    <property type="match status" value="1"/>
</dbReference>
<comment type="function">
    <text evidence="1">This is one of the proteins that bind and probably mediate the attachment of the 5S RNA into the large ribosomal subunit, where it forms part of the central protuberance. In the 70S ribosome it contacts protein S13 of the 30S subunit (bridge B1b), connecting the 2 subunits; this bridge is implicated in subunit movement. Contacts the P site tRNA; the 5S rRNA and some of its associated proteins might help stabilize positioning of ribosome-bound tRNAs.</text>
</comment>
<comment type="subunit">
    <text evidence="1">Part of the 50S ribosomal subunit; part of the 5S rRNA/L5/L18/L25 subcomplex. Contacts the 5S rRNA and the P site tRNA. Forms a bridge to the 30S subunit in the 70S ribosome.</text>
</comment>
<comment type="similarity">
    <text evidence="1">Belongs to the universal ribosomal protein uL5 family.</text>
</comment>
<accession>Q16AD2</accession>
<keyword id="KW-1185">Reference proteome</keyword>
<keyword id="KW-0687">Ribonucleoprotein</keyword>
<keyword id="KW-0689">Ribosomal protein</keyword>
<keyword id="KW-0694">RNA-binding</keyword>
<keyword id="KW-0699">rRNA-binding</keyword>
<keyword id="KW-0820">tRNA-binding</keyword>